<organism>
    <name type="scientific">Homo sapiens</name>
    <name type="common">Human</name>
    <dbReference type="NCBI Taxonomy" id="9606"/>
    <lineage>
        <taxon>Eukaryota</taxon>
        <taxon>Metazoa</taxon>
        <taxon>Chordata</taxon>
        <taxon>Craniata</taxon>
        <taxon>Vertebrata</taxon>
        <taxon>Euteleostomi</taxon>
        <taxon>Mammalia</taxon>
        <taxon>Eutheria</taxon>
        <taxon>Euarchontoglires</taxon>
        <taxon>Primates</taxon>
        <taxon>Haplorrhini</taxon>
        <taxon>Catarrhini</taxon>
        <taxon>Hominidae</taxon>
        <taxon>Homo</taxon>
    </lineage>
</organism>
<comment type="function">
    <text>G-protein coupled receptor for CRH (corticotropin-releasing factor), UCN (urocortin), UCN2 and UCN3. Has high affinity for UCN. Ligand binding causes a conformation change that triggers signaling via guanine nucleotide-binding proteins (G proteins) and down-stream effectors, such as adenylate cyclase. Promotes the activation of adenylate cyclase, leading to increased intracellular cAMP levels.</text>
</comment>
<comment type="subunit">
    <text evidence="3 4">Monomer. Interacts (via N-terminal extracellular domain) with CRF, UCN, UCN2 and UCN3. Has highest affinity for UCN, and considerably lower affinity for CRF, UNC2 and UCN3.</text>
</comment>
<comment type="interaction">
    <interactant intactId="EBI-26585317">
        <id>Q13324-1</id>
    </interactant>
    <interactant intactId="EBI-3870390">
        <id>P06850</id>
        <label>CRH</label>
    </interactant>
    <organismsDiffer>false</organismsDiffer>
    <experiments>4</experiments>
</comment>
<comment type="interaction">
    <interactant intactId="EBI-26585317">
        <id>Q13324-1</id>
    </interactant>
    <interactant intactId="EBI-26585468">
        <id>Q969E3</id>
        <label>UCN3</label>
    </interactant>
    <organismsDiffer>false</organismsDiffer>
    <experiments>2</experiments>
</comment>
<comment type="interaction">
    <interactant intactId="EBI-23865243">
        <id>Q13324-2</id>
    </interactant>
    <interactant intactId="EBI-750078">
        <id>Q13021</id>
        <label>MALL</label>
    </interactant>
    <organismsDiffer>false</organismsDiffer>
    <experiments>3</experiments>
</comment>
<comment type="subcellular location">
    <subcellularLocation>
        <location evidence="4">Cell membrane</location>
        <topology evidence="4">Multi-pass membrane protein</topology>
    </subcellularLocation>
</comment>
<comment type="alternative products">
    <event type="alternative splicing"/>
    <isoform>
        <id>Q13324-1</id>
        <name>CRF2-alpha</name>
        <sequence type="displayed"/>
    </isoform>
    <isoform>
        <id>Q13324-2</id>
        <name>CRF2-beta</name>
        <sequence type="described" ref="VSP_001999"/>
    </isoform>
    <isoform>
        <id>Q13324-3</id>
        <name>CRF2-gamma</name>
        <sequence type="described" ref="VSP_002000"/>
    </isoform>
    <isoform>
        <id>Q13324-4</id>
        <name>D</name>
        <sequence type="described" ref="VSP_053565"/>
    </isoform>
    <isoform>
        <id>Q13324-5</id>
        <name>E</name>
        <sequence type="described" ref="VSP_053566"/>
    </isoform>
    <isoform>
        <id>Q13324-6</id>
        <name>F</name>
        <sequence type="described" ref="VSP_053567"/>
    </isoform>
    <isoform>
        <id>Q13324-7</id>
        <name>desQ</name>
        <sequence type="described" ref="VSP_053564"/>
    </isoform>
</comment>
<comment type="domain">
    <text evidence="1">The transmembrane domain is composed of seven transmembrane helices that are arranged in V-shape. Transmembrane helix 7 assumes a sharply kinked structure (By similarity).</text>
</comment>
<comment type="domain">
    <text evidence="4">The uncleaved pseudo signal peptide prevents receptor's oligomerization and coupling to G(i) subunits. It is also responsible for the rather low receptor localization at the plasma membrane (PubMed:22689579).</text>
</comment>
<comment type="PTM">
    <text evidence="1">A N-glycosylation site within the signal peptide impedes its proper cleavage and function.</text>
</comment>
<comment type="similarity">
    <text evidence="9">Belongs to the G-protein coupled receptor 2 family.</text>
</comment>
<gene>
    <name type="primary">CRHR2</name>
    <name type="synonym">CRF2R</name>
    <name type="synonym">CRH2R</name>
</gene>
<protein>
    <recommendedName>
        <fullName>Corticotropin-releasing factor receptor 2</fullName>
        <shortName>CRF-R-2</shortName>
        <shortName>CRF-R2</shortName>
        <shortName>CRFR-2</shortName>
    </recommendedName>
    <alternativeName>
        <fullName>Corticotropin-releasing hormone receptor 2</fullName>
        <shortName>CRH-R-2</shortName>
        <shortName>CRH-R2</shortName>
    </alternativeName>
</protein>
<feature type="chain" id="PRO_0000012820" description="Corticotropin-releasing factor receptor 2">
    <location>
        <begin position="1"/>
        <end position="411"/>
    </location>
</feature>
<feature type="signal peptide" description="Not cleaved">
    <location>
        <begin position="1"/>
        <end position="19"/>
    </location>
</feature>
<feature type="topological domain" description="Extracellular" evidence="1">
    <location>
        <begin position="1"/>
        <end position="108"/>
    </location>
</feature>
<feature type="transmembrane region" description="Helical; Name=1" evidence="1">
    <location>
        <begin position="109"/>
        <end position="139"/>
    </location>
</feature>
<feature type="topological domain" description="Cytoplasmic" evidence="1">
    <location>
        <begin position="140"/>
        <end position="146"/>
    </location>
</feature>
<feature type="transmembrane region" description="Helical; Name=2" evidence="1">
    <location>
        <begin position="147"/>
        <end position="171"/>
    </location>
</feature>
<feature type="topological domain" description="Extracellular" evidence="1">
    <location>
        <begin position="172"/>
        <end position="185"/>
    </location>
</feature>
<feature type="transmembrane region" description="Helical; Name=3" evidence="1">
    <location>
        <begin position="186"/>
        <end position="214"/>
    </location>
</feature>
<feature type="topological domain" description="Cytoplasmic" evidence="1">
    <location>
        <begin position="215"/>
        <end position="221"/>
    </location>
</feature>
<feature type="transmembrane region" description="Helical; Name=4" evidence="1">
    <location>
        <begin position="222"/>
        <end position="249"/>
    </location>
</feature>
<feature type="topological domain" description="Extracellular" evidence="1">
    <location>
        <begin position="250"/>
        <end position="265"/>
    </location>
</feature>
<feature type="transmembrane region" description="Helical; Name=5" evidence="1">
    <location>
        <begin position="266"/>
        <end position="291"/>
    </location>
</feature>
<feature type="topological domain" description="Cytoplasmic" evidence="1">
    <location>
        <begin position="292"/>
        <end position="302"/>
    </location>
</feature>
<feature type="transmembrane region" description="Helical; Name=6" evidence="1">
    <location>
        <begin position="303"/>
        <end position="327"/>
    </location>
</feature>
<feature type="topological domain" description="Extracellular" evidence="1">
    <location>
        <begin position="328"/>
        <end position="334"/>
    </location>
</feature>
<feature type="transmembrane region" description="Helical; Name=7" evidence="1">
    <location>
        <begin position="335"/>
        <end position="364"/>
    </location>
</feature>
<feature type="topological domain" description="Cytoplasmic" evidence="1">
    <location>
        <begin position="365"/>
        <end position="411"/>
    </location>
</feature>
<feature type="glycosylation site" description="N-linked (GlcNAc...) asparagine" evidence="2">
    <location>
        <position position="13"/>
    </location>
</feature>
<feature type="glycosylation site" description="N-linked (GlcNAc...) asparagine" evidence="2">
    <location>
        <position position="41"/>
    </location>
</feature>
<feature type="glycosylation site" description="N-linked (GlcNAc...) asparagine" evidence="2">
    <location>
        <position position="74"/>
    </location>
</feature>
<feature type="glycosylation site" description="N-linked (GlcNAc...) asparagine" evidence="2">
    <location>
        <position position="86"/>
    </location>
</feature>
<feature type="glycosylation site" description="N-linked (GlcNAc...) asparagine" evidence="2">
    <location>
        <position position="94"/>
    </location>
</feature>
<feature type="disulfide bond" evidence="3">
    <location>
        <begin position="14"/>
        <end position="50"/>
    </location>
</feature>
<feature type="disulfide bond" evidence="3">
    <location>
        <begin position="40"/>
        <end position="83"/>
    </location>
</feature>
<feature type="disulfide bond" evidence="3">
    <location>
        <begin position="64"/>
        <end position="98"/>
    </location>
</feature>
<feature type="disulfide bond" evidence="1">
    <location>
        <begin position="184"/>
        <end position="254"/>
    </location>
</feature>
<feature type="splice variant" id="VSP_001999" description="In isoform CRF2-beta." evidence="5 7">
    <original>MDAALLHSLLEANCSLALAEELLLDGWGPPLDPE</original>
    <variation>MRGPSGPPGLLYVPHLLLCLLCLLPPPLQYAAGQSQMPKDQPLWALLEQYCHTIMTLTNLS</variation>
    <location>
        <begin position="1"/>
        <end position="34"/>
    </location>
</feature>
<feature type="splice variant" id="VSP_002000" description="In isoform CRF2-gamma." evidence="6">
    <original>MDAALLHSLLEANCSLALAEELLLDGWGPPLDPE</original>
    <variation>MGREPWPEDRDLGFPQLFCQ</variation>
    <location>
        <begin position="1"/>
        <end position="34"/>
    </location>
</feature>
<feature type="splice variant" id="VSP_053564" description="In isoform desQ." evidence="8">
    <location>
        <position position="106"/>
    </location>
</feature>
<feature type="splice variant" id="VSP_053565" description="In isoform D." evidence="8">
    <original>VRSAVRKRWHRWQDHHSLRVPMARAMSIPTSPTRISFHSIKQTAAV</original>
    <variation>SWVSKEAQAAGPHGREKPEQRW</variation>
    <location>
        <begin position="366"/>
        <end position="411"/>
    </location>
</feature>
<feature type="splice variant" id="VSP_053566" description="In isoform E." evidence="8">
    <original>VRSAVRKRWHRWQDHHSLRVPMARAMSIPTSPTRISFHSIKQTAAV</original>
    <variation>GLEPV</variation>
    <location>
        <begin position="366"/>
        <end position="411"/>
    </location>
</feature>
<feature type="splice variant" id="VSP_053567" description="In isoform F." evidence="8">
    <location>
        <begin position="367"/>
        <end position="411"/>
    </location>
</feature>
<feature type="sequence variant" id="VAR_049455" description="In dbSNP:rs34625936.">
    <original>E</original>
    <variation>D</variation>
    <location>
        <position position="220"/>
    </location>
</feature>
<feature type="sequence conflict" description="In Ref. 1; AAA91320 and 6; ABV59313/ABV59314/ABV59315/ABV59317." evidence="9" ref="1 6">
    <original>R</original>
    <variation>H</variation>
    <location>
        <position position="185"/>
    </location>
</feature>
<feature type="sequence conflict" description="In Ref. 7; BAG36414." evidence="9" ref="7">
    <original>W</original>
    <variation>R</variation>
    <location>
        <position position="374"/>
    </location>
</feature>
<feature type="helix" evidence="10">
    <location>
        <begin position="3"/>
        <end position="27"/>
    </location>
</feature>
<feature type="strand" evidence="10">
    <location>
        <begin position="59"/>
        <end position="63"/>
    </location>
</feature>
<feature type="strand" evidence="10">
    <location>
        <begin position="66"/>
        <end position="68"/>
    </location>
</feature>
<feature type="strand" evidence="10">
    <location>
        <begin position="71"/>
        <end position="73"/>
    </location>
</feature>
<feature type="strand" evidence="10">
    <location>
        <begin position="77"/>
        <end position="83"/>
    </location>
</feature>
<feature type="strand" evidence="11">
    <location>
        <begin position="87"/>
        <end position="89"/>
    </location>
</feature>
<feature type="helix" evidence="13">
    <location>
        <begin position="103"/>
        <end position="105"/>
    </location>
</feature>
<feature type="helix" evidence="12">
    <location>
        <begin position="111"/>
        <end position="140"/>
    </location>
</feature>
<feature type="helix" evidence="12">
    <location>
        <begin position="147"/>
        <end position="170"/>
    </location>
</feature>
<feature type="helix" evidence="12">
    <location>
        <begin position="174"/>
        <end position="178"/>
    </location>
</feature>
<feature type="helix" evidence="12">
    <location>
        <begin position="182"/>
        <end position="213"/>
    </location>
</feature>
<feature type="helix" evidence="12">
    <location>
        <begin position="219"/>
        <end position="221"/>
    </location>
</feature>
<feature type="helix" evidence="12">
    <location>
        <begin position="224"/>
        <end position="231"/>
    </location>
</feature>
<feature type="turn" evidence="12">
    <location>
        <begin position="232"/>
        <end position="236"/>
    </location>
</feature>
<feature type="helix" evidence="12">
    <location>
        <begin position="237"/>
        <end position="247"/>
    </location>
</feature>
<feature type="helix" evidence="12">
    <location>
        <begin position="253"/>
        <end position="255"/>
    </location>
</feature>
<feature type="helix" evidence="12">
    <location>
        <begin position="266"/>
        <end position="297"/>
    </location>
</feature>
<feature type="helix" evidence="12">
    <location>
        <begin position="301"/>
        <end position="315"/>
    </location>
</feature>
<feature type="turn" evidence="12">
    <location>
        <begin position="316"/>
        <end position="320"/>
    </location>
</feature>
<feature type="helix" evidence="12">
    <location>
        <begin position="321"/>
        <end position="324"/>
    </location>
</feature>
<feature type="helix" evidence="12">
    <location>
        <begin position="334"/>
        <end position="349"/>
    </location>
</feature>
<feature type="helix" evidence="12">
    <location>
        <begin position="351"/>
        <end position="360"/>
    </location>
</feature>
<feature type="helix" evidence="12">
    <location>
        <begin position="364"/>
        <end position="381"/>
    </location>
</feature>
<feature type="disulfide bond" evidence="9">
    <location sequence="Q13324-2">
        <begin position="51"/>
        <end position="77"/>
    </location>
</feature>
<evidence type="ECO:0000250" key="1"/>
<evidence type="ECO:0000255" key="2"/>
<evidence type="ECO:0000269" key="3">
    <source>
    </source>
</evidence>
<evidence type="ECO:0000269" key="4">
    <source>
    </source>
</evidence>
<evidence type="ECO:0000303" key="5">
    <source>
    </source>
</evidence>
<evidence type="ECO:0000303" key="6">
    <source>
    </source>
</evidence>
<evidence type="ECO:0000303" key="7">
    <source ref="2"/>
</evidence>
<evidence type="ECO:0000303" key="8">
    <source ref="6"/>
</evidence>
<evidence type="ECO:0000305" key="9"/>
<evidence type="ECO:0007829" key="10">
    <source>
        <dbReference type="PDB" id="3N93"/>
    </source>
</evidence>
<evidence type="ECO:0007829" key="11">
    <source>
        <dbReference type="PDB" id="3N96"/>
    </source>
</evidence>
<evidence type="ECO:0007829" key="12">
    <source>
        <dbReference type="PDB" id="6PB1"/>
    </source>
</evidence>
<evidence type="ECO:0007829" key="13">
    <source>
        <dbReference type="PDB" id="7TS0"/>
    </source>
</evidence>
<name>CRFR2_HUMAN</name>
<sequence length="411" mass="47688">MDAALLHSLLEANCSLALAEELLLDGWGPPLDPEGPYSYCNTTLDQIGTCWPRSAAGALVERPCPEYFNGVKYNTTRNAYRECLENGTWASKINYSQCEPILDDKQRKYDLHYRIALVVNYLGHCVSVAALVAAFLLFLALRSIRCLRNVIHWNLITTFILRNVMWFLLQLVDHEVHESNEVWCRCITTIFNYFVVTNFFWMFVEGCYLHTAIVMTYSTERLRKCLFLFIGWCIPFPIIVAWAIGKLYYENEQCWFGKEPGDLVDYIYQGPIILVLLINFVFLFNIVRILMTKLRASTTSETIQYRKAVKATLVLLPLLGITYMLFFVNPGEDDLSQIMFIYFNSFLQSFQGFFVSVFYCFFNGEVRSAVRKRWHRWQDHHSLRVPMARAMSIPTSPTRISFHSIKQTAAV</sequence>
<dbReference type="EMBL" id="U34587">
    <property type="protein sequence ID" value="AAA91320.1"/>
    <property type="molecule type" value="mRNA"/>
</dbReference>
<dbReference type="EMBL" id="AF011406">
    <property type="protein sequence ID" value="AAB94503.1"/>
    <property type="molecule type" value="mRNA"/>
</dbReference>
<dbReference type="EMBL" id="AF019381">
    <property type="protein sequence ID" value="AAB94562.1"/>
    <property type="molecule type" value="mRNA"/>
</dbReference>
<dbReference type="EMBL" id="AB065699">
    <property type="protein sequence ID" value="BAC05922.1"/>
    <property type="molecule type" value="Genomic_DNA"/>
</dbReference>
<dbReference type="EMBL" id="AY449734">
    <property type="protein sequence ID" value="AAR18078.1"/>
    <property type="molecule type" value="mRNA"/>
</dbReference>
<dbReference type="EMBL" id="EU012439">
    <property type="protein sequence ID" value="ABV59313.1"/>
    <property type="molecule type" value="mRNA"/>
</dbReference>
<dbReference type="EMBL" id="EU012440">
    <property type="protein sequence ID" value="ABV59314.1"/>
    <property type="molecule type" value="mRNA"/>
</dbReference>
<dbReference type="EMBL" id="EU012441">
    <property type="protein sequence ID" value="ABV59315.1"/>
    <property type="molecule type" value="mRNA"/>
</dbReference>
<dbReference type="EMBL" id="EU012443">
    <property type="protein sequence ID" value="ABV59317.1"/>
    <property type="molecule type" value="mRNA"/>
</dbReference>
<dbReference type="EMBL" id="AK313661">
    <property type="protein sequence ID" value="BAG36414.1"/>
    <property type="molecule type" value="mRNA"/>
</dbReference>
<dbReference type="EMBL" id="AC004976">
    <property type="protein sequence ID" value="AAC71653.1"/>
    <property type="molecule type" value="Genomic_DNA"/>
</dbReference>
<dbReference type="EMBL" id="AC004976">
    <property type="protein sequence ID" value="AAC71654.1"/>
    <property type="molecule type" value="Genomic_DNA"/>
</dbReference>
<dbReference type="EMBL" id="BC096830">
    <property type="protein sequence ID" value="AAH96830.1"/>
    <property type="molecule type" value="mRNA"/>
</dbReference>
<dbReference type="EMBL" id="Y10151">
    <property type="protein sequence ID" value="CAA71235.1"/>
    <property type="molecule type" value="mRNA"/>
</dbReference>
<dbReference type="CCDS" id="CCDS5429.1">
    <molecule id="Q13324-1"/>
</dbReference>
<dbReference type="CCDS" id="CCDS56477.1">
    <molecule id="Q13324-3"/>
</dbReference>
<dbReference type="CCDS" id="CCDS56478.1">
    <molecule id="Q13324-2"/>
</dbReference>
<dbReference type="CCDS" id="CCDS75576.1">
    <molecule id="Q13324-4"/>
</dbReference>
<dbReference type="RefSeq" id="NP_001189404.1">
    <molecule id="Q13324-2"/>
    <property type="nucleotide sequence ID" value="NM_001202475.1"/>
</dbReference>
<dbReference type="RefSeq" id="NP_001189410.1">
    <molecule id="Q13324-3"/>
    <property type="nucleotide sequence ID" value="NM_001202481.1"/>
</dbReference>
<dbReference type="RefSeq" id="NP_001189411.1">
    <molecule id="Q13324-7"/>
    <property type="nucleotide sequence ID" value="NM_001202482.2"/>
</dbReference>
<dbReference type="RefSeq" id="NP_001189412.1">
    <molecule id="Q13324-4"/>
    <property type="nucleotide sequence ID" value="NM_001202483.2"/>
</dbReference>
<dbReference type="RefSeq" id="NP_001874.2">
    <molecule id="Q13324-1"/>
    <property type="nucleotide sequence ID" value="NM_001883.4"/>
</dbReference>
<dbReference type="RefSeq" id="XP_011513430.1">
    <property type="nucleotide sequence ID" value="XM_011515128.2"/>
</dbReference>
<dbReference type="RefSeq" id="XP_011513431.1">
    <property type="nucleotide sequence ID" value="XM_011515129.2"/>
</dbReference>
<dbReference type="RefSeq" id="XP_016867241.1">
    <property type="nucleotide sequence ID" value="XM_017011752.1"/>
</dbReference>
<dbReference type="RefSeq" id="XP_047275848.1">
    <molecule id="Q13324-5"/>
    <property type="nucleotide sequence ID" value="XM_047419892.1"/>
</dbReference>
<dbReference type="RefSeq" id="XP_047275849.1">
    <molecule id="Q13324-4"/>
    <property type="nucleotide sequence ID" value="XM_047419893.1"/>
</dbReference>
<dbReference type="RefSeq" id="XP_054213241.1">
    <molecule id="Q13324-5"/>
    <property type="nucleotide sequence ID" value="XM_054357266.1"/>
</dbReference>
<dbReference type="RefSeq" id="XP_054213242.1">
    <molecule id="Q13324-4"/>
    <property type="nucleotide sequence ID" value="XM_054357267.1"/>
</dbReference>
<dbReference type="PDB" id="3N93">
    <property type="method" value="X-ray"/>
    <property type="resolution" value="2.50 A"/>
    <property type="chains" value="A/B=3-104"/>
</dbReference>
<dbReference type="PDB" id="3N95">
    <property type="method" value="X-ray"/>
    <property type="resolution" value="2.72 A"/>
    <property type="chains" value="A/B/C/D=3-104"/>
</dbReference>
<dbReference type="PDB" id="3N96">
    <property type="method" value="X-ray"/>
    <property type="resolution" value="2.75 A"/>
    <property type="chains" value="A/B/C/D=3-104"/>
</dbReference>
<dbReference type="PDB" id="6PB1">
    <property type="method" value="EM"/>
    <property type="resolution" value="2.80 A"/>
    <property type="chains" value="P=2-388"/>
</dbReference>
<dbReference type="PDB" id="7TRY">
    <property type="method" value="EM"/>
    <property type="resolution" value="3.70 A"/>
    <property type="chains" value="P=2-388"/>
</dbReference>
<dbReference type="PDB" id="7TS0">
    <property type="method" value="EM"/>
    <property type="resolution" value="2.80 A"/>
    <property type="chains" value="P=2-388"/>
</dbReference>
<dbReference type="PDBsum" id="3N93"/>
<dbReference type="PDBsum" id="3N95"/>
<dbReference type="PDBsum" id="3N96"/>
<dbReference type="PDBsum" id="6PB1"/>
<dbReference type="PDBsum" id="7TRY"/>
<dbReference type="PDBsum" id="7TS0"/>
<dbReference type="EMDB" id="EMD-20285"/>
<dbReference type="EMDB" id="EMD-26103"/>
<dbReference type="EMDB" id="EMD-26104"/>
<dbReference type="SMR" id="Q13324"/>
<dbReference type="BioGRID" id="107785">
    <property type="interactions" value="5"/>
</dbReference>
<dbReference type="CORUM" id="Q13324"/>
<dbReference type="FunCoup" id="Q13324">
    <property type="interactions" value="576"/>
</dbReference>
<dbReference type="IntAct" id="Q13324">
    <property type="interactions" value="7"/>
</dbReference>
<dbReference type="MINT" id="Q13324"/>
<dbReference type="STRING" id="9606.ENSP00000340943"/>
<dbReference type="BindingDB" id="Q13324"/>
<dbReference type="ChEMBL" id="CHEMBL4069"/>
<dbReference type="DrugBank" id="DB09067">
    <property type="generic name" value="Corticorelin ovine triflutate"/>
</dbReference>
<dbReference type="DrugBank" id="DB13033">
    <property type="generic name" value="Urocortin-2"/>
</dbReference>
<dbReference type="DrugCentral" id="Q13324"/>
<dbReference type="GuidetoPHARMACOLOGY" id="213"/>
<dbReference type="GlyCosmos" id="Q13324">
    <property type="glycosylation" value="5 sites, No reported glycans"/>
</dbReference>
<dbReference type="GlyGen" id="Q13324">
    <property type="glycosylation" value="5 sites"/>
</dbReference>
<dbReference type="PhosphoSitePlus" id="Q13324"/>
<dbReference type="BioMuta" id="CRHR2"/>
<dbReference type="DMDM" id="6226847"/>
<dbReference type="PaxDb" id="9606-ENSP00000340943"/>
<dbReference type="PeptideAtlas" id="Q13324"/>
<dbReference type="ProteomicsDB" id="30449"/>
<dbReference type="ProteomicsDB" id="59312">
    <molecule id="Q13324-1"/>
</dbReference>
<dbReference type="ProteomicsDB" id="59313">
    <molecule id="Q13324-2"/>
</dbReference>
<dbReference type="ProteomicsDB" id="59314">
    <molecule id="Q13324-3"/>
</dbReference>
<dbReference type="Antibodypedia" id="12618">
    <property type="antibodies" value="641 antibodies from 36 providers"/>
</dbReference>
<dbReference type="DNASU" id="1395"/>
<dbReference type="Ensembl" id="ENST00000341843.8">
    <molecule id="Q13324-3"/>
    <property type="protein sequence ID" value="ENSP00000344304.4"/>
    <property type="gene ID" value="ENSG00000106113.19"/>
</dbReference>
<dbReference type="Ensembl" id="ENST00000348438.8">
    <molecule id="Q13324-2"/>
    <property type="protein sequence ID" value="ENSP00000340943.4"/>
    <property type="gene ID" value="ENSG00000106113.19"/>
</dbReference>
<dbReference type="Ensembl" id="ENST00000471646.6">
    <molecule id="Q13324-1"/>
    <property type="protein sequence ID" value="ENSP00000418722.1"/>
    <property type="gene ID" value="ENSG00000106113.19"/>
</dbReference>
<dbReference type="Ensembl" id="ENST00000506074.6">
    <molecule id="Q13324-4"/>
    <property type="protein sequence ID" value="ENSP00000426498.3"/>
    <property type="gene ID" value="ENSG00000106113.19"/>
</dbReference>
<dbReference type="GeneID" id="1395"/>
<dbReference type="KEGG" id="hsa:1395"/>
<dbReference type="MANE-Select" id="ENST00000471646.6">
    <property type="protein sequence ID" value="ENSP00000418722.1"/>
    <property type="RefSeq nucleotide sequence ID" value="NM_001883.5"/>
    <property type="RefSeq protein sequence ID" value="NP_001874.2"/>
</dbReference>
<dbReference type="UCSC" id="uc003tbn.4">
    <molecule id="Q13324-1"/>
    <property type="organism name" value="human"/>
</dbReference>
<dbReference type="AGR" id="HGNC:2358"/>
<dbReference type="CTD" id="1395"/>
<dbReference type="DisGeNET" id="1395"/>
<dbReference type="GeneCards" id="CRHR2"/>
<dbReference type="HGNC" id="HGNC:2358">
    <property type="gene designation" value="CRHR2"/>
</dbReference>
<dbReference type="HPA" id="ENSG00000106113">
    <property type="expression patterns" value="Tissue enriched (choroid)"/>
</dbReference>
<dbReference type="MIM" id="602034">
    <property type="type" value="gene"/>
</dbReference>
<dbReference type="neXtProt" id="NX_Q13324"/>
<dbReference type="OpenTargets" id="ENSG00000106113"/>
<dbReference type="PharmGKB" id="PA26875"/>
<dbReference type="VEuPathDB" id="HostDB:ENSG00000106113"/>
<dbReference type="eggNOG" id="KOG4564">
    <property type="taxonomic scope" value="Eukaryota"/>
</dbReference>
<dbReference type="GeneTree" id="ENSGT00940000156795"/>
<dbReference type="HOGENOM" id="CLU_002753_4_1_1"/>
<dbReference type="InParanoid" id="Q13324"/>
<dbReference type="OMA" id="RINYSHC"/>
<dbReference type="OrthoDB" id="6022368at2759"/>
<dbReference type="PAN-GO" id="Q13324">
    <property type="GO annotations" value="9 GO annotations based on evolutionary models"/>
</dbReference>
<dbReference type="PhylomeDB" id="Q13324"/>
<dbReference type="TreeFam" id="TF315710"/>
<dbReference type="PathwayCommons" id="Q13324"/>
<dbReference type="Reactome" id="R-HSA-373080">
    <property type="pathway name" value="Class B/2 (Secretin family receptors)"/>
</dbReference>
<dbReference type="Reactome" id="R-HSA-418555">
    <property type="pathway name" value="G alpha (s) signalling events"/>
</dbReference>
<dbReference type="Reactome" id="R-HSA-422085">
    <property type="pathway name" value="Synthesis, secretion, and deacylation of Ghrelin"/>
</dbReference>
<dbReference type="SignaLink" id="Q13324"/>
<dbReference type="SIGNOR" id="Q13324"/>
<dbReference type="BioGRID-ORCS" id="1395">
    <property type="hits" value="13 hits in 1141 CRISPR screens"/>
</dbReference>
<dbReference type="ChiTaRS" id="CRHR2">
    <property type="organism name" value="human"/>
</dbReference>
<dbReference type="EvolutionaryTrace" id="Q13324"/>
<dbReference type="GeneWiki" id="Corticotropin_releasing_hormone_receptor_2"/>
<dbReference type="GenomeRNAi" id="1395"/>
<dbReference type="Pharos" id="Q13324">
    <property type="development level" value="Tchem"/>
</dbReference>
<dbReference type="PRO" id="PR:Q13324"/>
<dbReference type="Proteomes" id="UP000005640">
    <property type="component" value="Chromosome 7"/>
</dbReference>
<dbReference type="RNAct" id="Q13324">
    <property type="molecule type" value="protein"/>
</dbReference>
<dbReference type="Bgee" id="ENSG00000106113">
    <property type="expression patterns" value="Expressed in male germ line stem cell (sensu Vertebrata) in testis and 94 other cell types or tissues"/>
</dbReference>
<dbReference type="ExpressionAtlas" id="Q13324">
    <property type="expression patterns" value="baseline and differential"/>
</dbReference>
<dbReference type="GO" id="GO:0043679">
    <property type="term" value="C:axon terminus"/>
    <property type="evidence" value="ECO:0000318"/>
    <property type="project" value="GO_Central"/>
</dbReference>
<dbReference type="GO" id="GO:0030425">
    <property type="term" value="C:dendrite"/>
    <property type="evidence" value="ECO:0000318"/>
    <property type="project" value="GO_Central"/>
</dbReference>
<dbReference type="GO" id="GO:0005886">
    <property type="term" value="C:plasma membrane"/>
    <property type="evidence" value="ECO:0000314"/>
    <property type="project" value="HPA"/>
</dbReference>
<dbReference type="GO" id="GO:0015056">
    <property type="term" value="F:corticotrophin-releasing factor receptor activity"/>
    <property type="evidence" value="ECO:0000318"/>
    <property type="project" value="GO_Central"/>
</dbReference>
<dbReference type="GO" id="GO:0043404">
    <property type="term" value="F:corticotropin-releasing hormone receptor activity"/>
    <property type="evidence" value="ECO:0000318"/>
    <property type="project" value="GO_Central"/>
</dbReference>
<dbReference type="GO" id="GO:0008528">
    <property type="term" value="F:G protein-coupled peptide receptor activity"/>
    <property type="evidence" value="ECO:0000318"/>
    <property type="project" value="GO_Central"/>
</dbReference>
<dbReference type="GO" id="GO:0017046">
    <property type="term" value="F:peptide hormone binding"/>
    <property type="evidence" value="ECO:0000318"/>
    <property type="project" value="GO_Central"/>
</dbReference>
<dbReference type="GO" id="GO:0007188">
    <property type="term" value="P:adenylate cyclase-modulating G protein-coupled receptor signaling pathway"/>
    <property type="evidence" value="ECO:0000318"/>
    <property type="project" value="GO_Central"/>
</dbReference>
<dbReference type="GO" id="GO:0007166">
    <property type="term" value="P:cell surface receptor signaling pathway"/>
    <property type="evidence" value="ECO:0007669"/>
    <property type="project" value="InterPro"/>
</dbReference>
<dbReference type="GO" id="GO:0060291">
    <property type="term" value="P:long-term synaptic potentiation"/>
    <property type="evidence" value="ECO:0000318"/>
    <property type="project" value="GO_Central"/>
</dbReference>
<dbReference type="CDD" id="cd15446">
    <property type="entry name" value="7tmB1_CRF-R2"/>
    <property type="match status" value="1"/>
</dbReference>
<dbReference type="FunFam" id="1.20.1070.10:FF:000021">
    <property type="entry name" value="Corticotropin releasing factor receptor 2"/>
    <property type="match status" value="1"/>
</dbReference>
<dbReference type="FunFam" id="4.10.1240.10:FF:000006">
    <property type="entry name" value="corticotropin-releasing factor receptor 2 isoform X2"/>
    <property type="match status" value="1"/>
</dbReference>
<dbReference type="Gene3D" id="4.10.1240.10">
    <property type="entry name" value="GPCR, family 2, extracellular hormone receptor domain"/>
    <property type="match status" value="1"/>
</dbReference>
<dbReference type="Gene3D" id="1.20.1070.10">
    <property type="entry name" value="Rhodopsin 7-helix transmembrane proteins"/>
    <property type="match status" value="1"/>
</dbReference>
<dbReference type="InterPro" id="IPR050332">
    <property type="entry name" value="GPCR_2"/>
</dbReference>
<dbReference type="InterPro" id="IPR017981">
    <property type="entry name" value="GPCR_2-like_7TM"/>
</dbReference>
<dbReference type="InterPro" id="IPR003053">
    <property type="entry name" value="GPCR_2_CRF2_rcpt"/>
</dbReference>
<dbReference type="InterPro" id="IPR003051">
    <property type="entry name" value="GPCR_2_CRF_rcpt"/>
</dbReference>
<dbReference type="InterPro" id="IPR036445">
    <property type="entry name" value="GPCR_2_extracell_dom_sf"/>
</dbReference>
<dbReference type="InterPro" id="IPR001879">
    <property type="entry name" value="GPCR_2_extracellular_dom"/>
</dbReference>
<dbReference type="InterPro" id="IPR000832">
    <property type="entry name" value="GPCR_2_secretin-like"/>
</dbReference>
<dbReference type="InterPro" id="IPR017983">
    <property type="entry name" value="GPCR_2_secretin-like_CS"/>
</dbReference>
<dbReference type="PANTHER" id="PTHR45620:SF19">
    <property type="entry name" value="CORTICOTROPIN-RELEASING FACTOR RECEPTOR 2"/>
    <property type="match status" value="1"/>
</dbReference>
<dbReference type="PANTHER" id="PTHR45620">
    <property type="entry name" value="PDF RECEPTOR-LIKE PROTEIN-RELATED"/>
    <property type="match status" value="1"/>
</dbReference>
<dbReference type="Pfam" id="PF00002">
    <property type="entry name" value="7tm_2"/>
    <property type="match status" value="1"/>
</dbReference>
<dbReference type="Pfam" id="PF02793">
    <property type="entry name" value="HRM"/>
    <property type="match status" value="1"/>
</dbReference>
<dbReference type="PRINTS" id="PR01279">
    <property type="entry name" value="CRFRECEPTOR"/>
</dbReference>
<dbReference type="PRINTS" id="PR01281">
    <property type="entry name" value="CRFRECEPTOR2"/>
</dbReference>
<dbReference type="PRINTS" id="PR00249">
    <property type="entry name" value="GPCRSECRETIN"/>
</dbReference>
<dbReference type="SMART" id="SM00008">
    <property type="entry name" value="HormR"/>
    <property type="match status" value="1"/>
</dbReference>
<dbReference type="SUPFAM" id="SSF81321">
    <property type="entry name" value="Family A G protein-coupled receptor-like"/>
    <property type="match status" value="1"/>
</dbReference>
<dbReference type="SUPFAM" id="SSF111418">
    <property type="entry name" value="Hormone receptor domain"/>
    <property type="match status" value="1"/>
</dbReference>
<dbReference type="PROSITE" id="PS00649">
    <property type="entry name" value="G_PROTEIN_RECEP_F2_1"/>
    <property type="match status" value="1"/>
</dbReference>
<dbReference type="PROSITE" id="PS00650">
    <property type="entry name" value="G_PROTEIN_RECEP_F2_2"/>
    <property type="match status" value="1"/>
</dbReference>
<dbReference type="PROSITE" id="PS50227">
    <property type="entry name" value="G_PROTEIN_RECEP_F2_3"/>
    <property type="match status" value="1"/>
</dbReference>
<dbReference type="PROSITE" id="PS50261">
    <property type="entry name" value="G_PROTEIN_RECEP_F2_4"/>
    <property type="match status" value="1"/>
</dbReference>
<keyword id="KW-0002">3D-structure</keyword>
<keyword id="KW-0025">Alternative splicing</keyword>
<keyword id="KW-1003">Cell membrane</keyword>
<keyword id="KW-1015">Disulfide bond</keyword>
<keyword id="KW-0297">G-protein coupled receptor</keyword>
<keyword id="KW-0325">Glycoprotein</keyword>
<keyword id="KW-0472">Membrane</keyword>
<keyword id="KW-0675">Receptor</keyword>
<keyword id="KW-1185">Reference proteome</keyword>
<keyword id="KW-0732">Signal</keyword>
<keyword id="KW-0807">Transducer</keyword>
<keyword id="KW-0812">Transmembrane</keyword>
<keyword id="KW-1133">Transmembrane helix</keyword>
<reference key="1">
    <citation type="journal article" date="1996" name="Endocrinology">
        <title>Cloning and characterization of the human corticotropin-releasing factor-2 receptor complementary deoxyribonucleic acid.</title>
        <authorList>
            <person name="Liaw C.W."/>
            <person name="Lovenberg T.W."/>
            <person name="Barry G."/>
            <person name="Oltersdorf T."/>
            <person name="Grigoriadis D.E."/>
            <person name="de Souza E.B."/>
        </authorList>
    </citation>
    <scope>NUCLEOTIDE SEQUENCE [MRNA] (ISOFORM CRF2-ALPHA)</scope>
</reference>
<reference key="2">
    <citation type="submission" date="1997-06" db="EMBL/GenBank/DDBJ databases">
        <title>Molecular cloning of the human CRH2B receptor isoform: divergence from the rodent isoform in sequence and expression pattern.</title>
        <authorList>
            <person name="Kostich W.A."/>
            <person name="Chen A."/>
            <person name="Sperle K."/>
            <person name="Horlick R.A."/>
            <person name="Patterson J."/>
            <person name="Hyde T.M."/>
            <person name="Largent B.L."/>
        </authorList>
    </citation>
    <scope>NUCLEOTIDE SEQUENCE [MRNA] (ISOFORM CRF2-BETA)</scope>
    <source>
        <tissue>Amygdala</tissue>
    </source>
</reference>
<reference key="3">
    <citation type="journal article" date="1998" name="Mol. Endocrinol.">
        <title>Molecular identification and analysis of a novel human corticotropin-releasing factor (CRF) receptor: the CRF2gamma receptor.</title>
        <authorList>
            <person name="Kostich W.A."/>
            <person name="Chen A."/>
            <person name="Sperle K."/>
            <person name="Largent B.L."/>
        </authorList>
    </citation>
    <scope>NUCLEOTIDE SEQUENCE [MRNA] (ISOFORM CRF2-GAMMA)</scope>
    <source>
        <tissue>Amygdala</tissue>
    </source>
</reference>
<reference key="4">
    <citation type="submission" date="2001-07" db="EMBL/GenBank/DDBJ databases">
        <title>Genome-wide discovery and analysis of human seven transmembrane helix receptor genes.</title>
        <authorList>
            <person name="Suwa M."/>
            <person name="Sato T."/>
            <person name="Okouchi I."/>
            <person name="Arita M."/>
            <person name="Futami K."/>
            <person name="Matsumoto S."/>
            <person name="Tsutsumi S."/>
            <person name="Aburatani H."/>
            <person name="Asai K."/>
            <person name="Akiyama Y."/>
        </authorList>
    </citation>
    <scope>NUCLEOTIDE SEQUENCE [GENOMIC DNA] (ISOFORM CRF2-ALPHA)</scope>
</reference>
<reference key="5">
    <citation type="submission" date="2003-10" db="EMBL/GenBank/DDBJ databases">
        <title>cDNA clones of human proteins involved in signal transduction sequenced by the Guthrie cDNA resource center (www.cdna.org).</title>
        <authorList>
            <person name="King M.M."/>
            <person name="Aronstam R.S."/>
            <person name="Sharma S.V."/>
        </authorList>
    </citation>
    <scope>NUCLEOTIDE SEQUENCE [LARGE SCALE MRNA] (ISOFORM CRF2-ALPHA)</scope>
    <source>
        <tissue>Brain</tissue>
    </source>
</reference>
<reference key="6">
    <citation type="submission" date="2007-07" db="EMBL/GenBank/DDBJ databases">
        <title>Identification and characterization of novel CRF receptor type 2 isoforms in human.</title>
        <authorList>
            <person name="Wu S.V."/>
            <person name="Yuan P.-Q."/>
            <person name="Lai J."/>
            <person name="Tache Y."/>
        </authorList>
    </citation>
    <scope>NUCLEOTIDE SEQUENCE [MRNA] (ISOFORMS D; E; F AND DESQ)</scope>
    <scope>ALTERNATIVE SPLICING</scope>
</reference>
<reference key="7">
    <citation type="journal article" date="2004" name="Nat. Genet.">
        <title>Complete sequencing and characterization of 21,243 full-length human cDNAs.</title>
        <authorList>
            <person name="Ota T."/>
            <person name="Suzuki Y."/>
            <person name="Nishikawa T."/>
            <person name="Otsuki T."/>
            <person name="Sugiyama T."/>
            <person name="Irie R."/>
            <person name="Wakamatsu A."/>
            <person name="Hayashi K."/>
            <person name="Sato H."/>
            <person name="Nagai K."/>
            <person name="Kimura K."/>
            <person name="Makita H."/>
            <person name="Sekine M."/>
            <person name="Obayashi M."/>
            <person name="Nishi T."/>
            <person name="Shibahara T."/>
            <person name="Tanaka T."/>
            <person name="Ishii S."/>
            <person name="Yamamoto J."/>
            <person name="Saito K."/>
            <person name="Kawai Y."/>
            <person name="Isono Y."/>
            <person name="Nakamura Y."/>
            <person name="Nagahari K."/>
            <person name="Murakami K."/>
            <person name="Yasuda T."/>
            <person name="Iwayanagi T."/>
            <person name="Wagatsuma M."/>
            <person name="Shiratori A."/>
            <person name="Sudo H."/>
            <person name="Hosoiri T."/>
            <person name="Kaku Y."/>
            <person name="Kodaira H."/>
            <person name="Kondo H."/>
            <person name="Sugawara M."/>
            <person name="Takahashi M."/>
            <person name="Kanda K."/>
            <person name="Yokoi T."/>
            <person name="Furuya T."/>
            <person name="Kikkawa E."/>
            <person name="Omura Y."/>
            <person name="Abe K."/>
            <person name="Kamihara K."/>
            <person name="Katsuta N."/>
            <person name="Sato K."/>
            <person name="Tanikawa M."/>
            <person name="Yamazaki M."/>
            <person name="Ninomiya K."/>
            <person name="Ishibashi T."/>
            <person name="Yamashita H."/>
            <person name="Murakawa K."/>
            <person name="Fujimori K."/>
            <person name="Tanai H."/>
            <person name="Kimata M."/>
            <person name="Watanabe M."/>
            <person name="Hiraoka S."/>
            <person name="Chiba Y."/>
            <person name="Ishida S."/>
            <person name="Ono Y."/>
            <person name="Takiguchi S."/>
            <person name="Watanabe S."/>
            <person name="Yosida M."/>
            <person name="Hotuta T."/>
            <person name="Kusano J."/>
            <person name="Kanehori K."/>
            <person name="Takahashi-Fujii A."/>
            <person name="Hara H."/>
            <person name="Tanase T.-O."/>
            <person name="Nomura Y."/>
            <person name="Togiya S."/>
            <person name="Komai F."/>
            <person name="Hara R."/>
            <person name="Takeuchi K."/>
            <person name="Arita M."/>
            <person name="Imose N."/>
            <person name="Musashino K."/>
            <person name="Yuuki H."/>
            <person name="Oshima A."/>
            <person name="Sasaki N."/>
            <person name="Aotsuka S."/>
            <person name="Yoshikawa Y."/>
            <person name="Matsunawa H."/>
            <person name="Ichihara T."/>
            <person name="Shiohata N."/>
            <person name="Sano S."/>
            <person name="Moriya S."/>
            <person name="Momiyama H."/>
            <person name="Satoh N."/>
            <person name="Takami S."/>
            <person name="Terashima Y."/>
            <person name="Suzuki O."/>
            <person name="Nakagawa S."/>
            <person name="Senoh A."/>
            <person name="Mizoguchi H."/>
            <person name="Goto Y."/>
            <person name="Shimizu F."/>
            <person name="Wakebe H."/>
            <person name="Hishigaki H."/>
            <person name="Watanabe T."/>
            <person name="Sugiyama A."/>
            <person name="Takemoto M."/>
            <person name="Kawakami B."/>
            <person name="Yamazaki M."/>
            <person name="Watanabe K."/>
            <person name="Kumagai A."/>
            <person name="Itakura S."/>
            <person name="Fukuzumi Y."/>
            <person name="Fujimori Y."/>
            <person name="Komiyama M."/>
            <person name="Tashiro H."/>
            <person name="Tanigami A."/>
            <person name="Fujiwara T."/>
            <person name="Ono T."/>
            <person name="Yamada K."/>
            <person name="Fujii Y."/>
            <person name="Ozaki K."/>
            <person name="Hirao M."/>
            <person name="Ohmori Y."/>
            <person name="Kawabata A."/>
            <person name="Hikiji T."/>
            <person name="Kobatake N."/>
            <person name="Inagaki H."/>
            <person name="Ikema Y."/>
            <person name="Okamoto S."/>
            <person name="Okitani R."/>
            <person name="Kawakami T."/>
            <person name="Noguchi S."/>
            <person name="Itoh T."/>
            <person name="Shigeta K."/>
            <person name="Senba T."/>
            <person name="Matsumura K."/>
            <person name="Nakajima Y."/>
            <person name="Mizuno T."/>
            <person name="Morinaga M."/>
            <person name="Sasaki M."/>
            <person name="Togashi T."/>
            <person name="Oyama M."/>
            <person name="Hata H."/>
            <person name="Watanabe M."/>
            <person name="Komatsu T."/>
            <person name="Mizushima-Sugano J."/>
            <person name="Satoh T."/>
            <person name="Shirai Y."/>
            <person name="Takahashi Y."/>
            <person name="Nakagawa K."/>
            <person name="Okumura K."/>
            <person name="Nagase T."/>
            <person name="Nomura N."/>
            <person name="Kikuchi H."/>
            <person name="Masuho Y."/>
            <person name="Yamashita R."/>
            <person name="Nakai K."/>
            <person name="Yada T."/>
            <person name="Nakamura Y."/>
            <person name="Ohara O."/>
            <person name="Isogai T."/>
            <person name="Sugano S."/>
        </authorList>
    </citation>
    <scope>NUCLEOTIDE SEQUENCE [LARGE SCALE MRNA] (ISOFORM CRF2-ALPHA)</scope>
    <source>
        <tissue>Amygdala</tissue>
    </source>
</reference>
<reference key="8">
    <citation type="journal article" date="2003" name="Nature">
        <title>The DNA sequence of human chromosome 7.</title>
        <authorList>
            <person name="Hillier L.W."/>
            <person name="Fulton R.S."/>
            <person name="Fulton L.A."/>
            <person name="Graves T.A."/>
            <person name="Pepin K.H."/>
            <person name="Wagner-McPherson C."/>
            <person name="Layman D."/>
            <person name="Maas J."/>
            <person name="Jaeger S."/>
            <person name="Walker R."/>
            <person name="Wylie K."/>
            <person name="Sekhon M."/>
            <person name="Becker M.C."/>
            <person name="O'Laughlin M.D."/>
            <person name="Schaller M.E."/>
            <person name="Fewell G.A."/>
            <person name="Delehaunty K.D."/>
            <person name="Miner T.L."/>
            <person name="Nash W.E."/>
            <person name="Cordes M."/>
            <person name="Du H."/>
            <person name="Sun H."/>
            <person name="Edwards J."/>
            <person name="Bradshaw-Cordum H."/>
            <person name="Ali J."/>
            <person name="Andrews S."/>
            <person name="Isak A."/>
            <person name="Vanbrunt A."/>
            <person name="Nguyen C."/>
            <person name="Du F."/>
            <person name="Lamar B."/>
            <person name="Courtney L."/>
            <person name="Kalicki J."/>
            <person name="Ozersky P."/>
            <person name="Bielicki L."/>
            <person name="Scott K."/>
            <person name="Holmes A."/>
            <person name="Harkins R."/>
            <person name="Harris A."/>
            <person name="Strong C.M."/>
            <person name="Hou S."/>
            <person name="Tomlinson C."/>
            <person name="Dauphin-Kohlberg S."/>
            <person name="Kozlowicz-Reilly A."/>
            <person name="Leonard S."/>
            <person name="Rohlfing T."/>
            <person name="Rock S.M."/>
            <person name="Tin-Wollam A.-M."/>
            <person name="Abbott A."/>
            <person name="Minx P."/>
            <person name="Maupin R."/>
            <person name="Strowmatt C."/>
            <person name="Latreille P."/>
            <person name="Miller N."/>
            <person name="Johnson D."/>
            <person name="Murray J."/>
            <person name="Woessner J.P."/>
            <person name="Wendl M.C."/>
            <person name="Yang S.-P."/>
            <person name="Schultz B.R."/>
            <person name="Wallis J.W."/>
            <person name="Spieth J."/>
            <person name="Bieri T.A."/>
            <person name="Nelson J.O."/>
            <person name="Berkowicz N."/>
            <person name="Wohldmann P.E."/>
            <person name="Cook L.L."/>
            <person name="Hickenbotham M.T."/>
            <person name="Eldred J."/>
            <person name="Williams D."/>
            <person name="Bedell J.A."/>
            <person name="Mardis E.R."/>
            <person name="Clifton S.W."/>
            <person name="Chissoe S.L."/>
            <person name="Marra M.A."/>
            <person name="Raymond C."/>
            <person name="Haugen E."/>
            <person name="Gillett W."/>
            <person name="Zhou Y."/>
            <person name="James R."/>
            <person name="Phelps K."/>
            <person name="Iadanoto S."/>
            <person name="Bubb K."/>
            <person name="Simms E."/>
            <person name="Levy R."/>
            <person name="Clendenning J."/>
            <person name="Kaul R."/>
            <person name="Kent W.J."/>
            <person name="Furey T.S."/>
            <person name="Baertsch R.A."/>
            <person name="Brent M.R."/>
            <person name="Keibler E."/>
            <person name="Flicek P."/>
            <person name="Bork P."/>
            <person name="Suyama M."/>
            <person name="Bailey J.A."/>
            <person name="Portnoy M.E."/>
            <person name="Torrents D."/>
            <person name="Chinwalla A.T."/>
            <person name="Gish W.R."/>
            <person name="Eddy S.R."/>
            <person name="McPherson J.D."/>
            <person name="Olson M.V."/>
            <person name="Eichler E.E."/>
            <person name="Green E.D."/>
            <person name="Waterston R.H."/>
            <person name="Wilson R.K."/>
        </authorList>
    </citation>
    <scope>NUCLEOTIDE SEQUENCE [LARGE SCALE GENOMIC DNA]</scope>
</reference>
<reference key="9">
    <citation type="journal article" date="2004" name="Genome Res.">
        <title>The status, quality, and expansion of the NIH full-length cDNA project: the Mammalian Gene Collection (MGC).</title>
        <authorList>
            <consortium name="The MGC Project Team"/>
        </authorList>
    </citation>
    <scope>NUCLEOTIDE SEQUENCE [LARGE SCALE MRNA] (ISOFORM CRF2-ALPHA)</scope>
</reference>
<reference key="10">
    <citation type="journal article" date="1997" name="Biochim. Biophys. Acta">
        <title>A new functional isoform of the human CRF2 receptor for corticotropin-releasing factor.</title>
        <authorList>
            <person name="Valdenaire O."/>
            <person name="Giller T."/>
            <person name="Breu V."/>
            <person name="Gottowik J."/>
            <person name="Kilpatrick G."/>
        </authorList>
    </citation>
    <scope>NUCLEOTIDE SEQUENCE [MRNA] OF 1-88 (ISOFORM CRF2-BETA)</scope>
    <source>
        <tissue>Skeletal muscle</tissue>
    </source>
</reference>
<reference key="11">
    <citation type="journal article" date="2012" name="J. Biol. Chem.">
        <title>The Pseudo signal peptide of the corticotropin-releasing factor receptor type 2A prevents receptor oligomerization.</title>
        <authorList>
            <person name="Teichmann A."/>
            <person name="Rutz C."/>
            <person name="Kreuchwig A."/>
            <person name="Krause G."/>
            <person name="Wiesner B."/>
            <person name="Schulein R."/>
        </authorList>
    </citation>
    <scope>SUBUNIT</scope>
    <scope>SUBCELLULAR LOCATION</scope>
    <scope>NON-CLEAVABLE SIGNAL SEQUENCE</scope>
</reference>
<reference key="12">
    <citation type="journal article" date="2010" name="J. Biol. Chem.">
        <title>Structural basis for hormone recognition by the Human CRFR2{alpha} G protein-coupled receptor.</title>
        <authorList>
            <person name="Pal K."/>
            <person name="Swaminathan K."/>
            <person name="Xu H.E."/>
            <person name="Pioszak A.A."/>
        </authorList>
    </citation>
    <scope>X-RAY CRYSTALLOGRAPHY (2.5 ANGSTROMS) OF 3-104 IN COMPLEXES WITH UCN; UCN2 AND UCN3</scope>
    <scope>INTERACTION WITH CRF; UCN; UCN2 AND UCN3</scope>
    <scope>DISULFIDE BONDS</scope>
</reference>
<proteinExistence type="evidence at protein level"/>
<accession>Q13324</accession>
<accession>B2R967</accession>
<accession>B3SXS6</accession>
<accession>B3SXS7</accession>
<accession>B3SXS8</accession>
<accession>B3SXT0</accession>
<accession>F8WA81</accession>
<accession>O43461</accession>
<accession>Q4QRJ4</accession>
<accession>Q99431</accession>